<feature type="chain" id="PRO_1000126612" description="Large ribosomal subunit protein bL31">
    <location>
        <begin position="1"/>
        <end position="70"/>
    </location>
</feature>
<feature type="binding site" evidence="1">
    <location>
        <position position="16"/>
    </location>
    <ligand>
        <name>Zn(2+)</name>
        <dbReference type="ChEBI" id="CHEBI:29105"/>
    </ligand>
</feature>
<feature type="binding site" evidence="1">
    <location>
        <position position="18"/>
    </location>
    <ligand>
        <name>Zn(2+)</name>
        <dbReference type="ChEBI" id="CHEBI:29105"/>
    </ligand>
</feature>
<feature type="binding site" evidence="1">
    <location>
        <position position="37"/>
    </location>
    <ligand>
        <name>Zn(2+)</name>
        <dbReference type="ChEBI" id="CHEBI:29105"/>
    </ligand>
</feature>
<feature type="binding site" evidence="1">
    <location>
        <position position="40"/>
    </location>
    <ligand>
        <name>Zn(2+)</name>
        <dbReference type="ChEBI" id="CHEBI:29105"/>
    </ligand>
</feature>
<feature type="modified residue" description="N6-acetyllysine" evidence="1">
    <location>
        <position position="8"/>
    </location>
</feature>
<accession>A7ZUF1</accession>
<proteinExistence type="inferred from homology"/>
<evidence type="ECO:0000255" key="1">
    <source>
        <dbReference type="HAMAP-Rule" id="MF_00501"/>
    </source>
</evidence>
<evidence type="ECO:0000305" key="2"/>
<keyword id="KW-0007">Acetylation</keyword>
<keyword id="KW-0479">Metal-binding</keyword>
<keyword id="KW-1185">Reference proteome</keyword>
<keyword id="KW-0687">Ribonucleoprotein</keyword>
<keyword id="KW-0689">Ribosomal protein</keyword>
<keyword id="KW-0694">RNA-binding</keyword>
<keyword id="KW-0699">rRNA-binding</keyword>
<keyword id="KW-0862">Zinc</keyword>
<organism>
    <name type="scientific">Escherichia coli O139:H28 (strain E24377A / ETEC)</name>
    <dbReference type="NCBI Taxonomy" id="331111"/>
    <lineage>
        <taxon>Bacteria</taxon>
        <taxon>Pseudomonadati</taxon>
        <taxon>Pseudomonadota</taxon>
        <taxon>Gammaproteobacteria</taxon>
        <taxon>Enterobacterales</taxon>
        <taxon>Enterobacteriaceae</taxon>
        <taxon>Escherichia</taxon>
    </lineage>
</organism>
<dbReference type="EMBL" id="CP000800">
    <property type="protein sequence ID" value="ABV20537.1"/>
    <property type="molecule type" value="Genomic_DNA"/>
</dbReference>
<dbReference type="RefSeq" id="WP_000710769.1">
    <property type="nucleotide sequence ID" value="NC_009801.1"/>
</dbReference>
<dbReference type="SMR" id="A7ZUF1"/>
<dbReference type="GeneID" id="93777962"/>
<dbReference type="KEGG" id="ecw:EcE24377A_4472"/>
<dbReference type="HOGENOM" id="CLU_114306_4_3_6"/>
<dbReference type="Proteomes" id="UP000001122">
    <property type="component" value="Chromosome"/>
</dbReference>
<dbReference type="GO" id="GO:1990904">
    <property type="term" value="C:ribonucleoprotein complex"/>
    <property type="evidence" value="ECO:0007669"/>
    <property type="project" value="UniProtKB-KW"/>
</dbReference>
<dbReference type="GO" id="GO:0005840">
    <property type="term" value="C:ribosome"/>
    <property type="evidence" value="ECO:0007669"/>
    <property type="project" value="UniProtKB-KW"/>
</dbReference>
<dbReference type="GO" id="GO:0046872">
    <property type="term" value="F:metal ion binding"/>
    <property type="evidence" value="ECO:0007669"/>
    <property type="project" value="UniProtKB-KW"/>
</dbReference>
<dbReference type="GO" id="GO:0019843">
    <property type="term" value="F:rRNA binding"/>
    <property type="evidence" value="ECO:0007669"/>
    <property type="project" value="UniProtKB-KW"/>
</dbReference>
<dbReference type="GO" id="GO:0003735">
    <property type="term" value="F:structural constituent of ribosome"/>
    <property type="evidence" value="ECO:0007669"/>
    <property type="project" value="InterPro"/>
</dbReference>
<dbReference type="GO" id="GO:0006412">
    <property type="term" value="P:translation"/>
    <property type="evidence" value="ECO:0007669"/>
    <property type="project" value="UniProtKB-UniRule"/>
</dbReference>
<dbReference type="FunFam" id="4.10.830.30:FF:000001">
    <property type="entry name" value="50S ribosomal protein L31"/>
    <property type="match status" value="1"/>
</dbReference>
<dbReference type="Gene3D" id="4.10.830.30">
    <property type="entry name" value="Ribosomal protein L31"/>
    <property type="match status" value="1"/>
</dbReference>
<dbReference type="HAMAP" id="MF_00501">
    <property type="entry name" value="Ribosomal_bL31_1"/>
    <property type="match status" value="1"/>
</dbReference>
<dbReference type="InterPro" id="IPR034704">
    <property type="entry name" value="Ribosomal_bL28/bL31-like_sf"/>
</dbReference>
<dbReference type="InterPro" id="IPR002150">
    <property type="entry name" value="Ribosomal_bL31"/>
</dbReference>
<dbReference type="InterPro" id="IPR027491">
    <property type="entry name" value="Ribosomal_bL31_A"/>
</dbReference>
<dbReference type="InterPro" id="IPR042105">
    <property type="entry name" value="Ribosomal_bL31_sf"/>
</dbReference>
<dbReference type="NCBIfam" id="TIGR00105">
    <property type="entry name" value="L31"/>
    <property type="match status" value="1"/>
</dbReference>
<dbReference type="NCBIfam" id="NF000612">
    <property type="entry name" value="PRK00019.1"/>
    <property type="match status" value="1"/>
</dbReference>
<dbReference type="NCBIfam" id="NF001809">
    <property type="entry name" value="PRK00528.1"/>
    <property type="match status" value="1"/>
</dbReference>
<dbReference type="PANTHER" id="PTHR33280">
    <property type="entry name" value="50S RIBOSOMAL PROTEIN L31, CHLOROPLASTIC"/>
    <property type="match status" value="1"/>
</dbReference>
<dbReference type="PANTHER" id="PTHR33280:SF6">
    <property type="entry name" value="LARGE RIBOSOMAL SUBUNIT PROTEIN BL31A"/>
    <property type="match status" value="1"/>
</dbReference>
<dbReference type="Pfam" id="PF01197">
    <property type="entry name" value="Ribosomal_L31"/>
    <property type="match status" value="1"/>
</dbReference>
<dbReference type="PRINTS" id="PR01249">
    <property type="entry name" value="RIBOSOMALL31"/>
</dbReference>
<dbReference type="SUPFAM" id="SSF143800">
    <property type="entry name" value="L28p-like"/>
    <property type="match status" value="1"/>
</dbReference>
<dbReference type="PROSITE" id="PS01143">
    <property type="entry name" value="RIBOSOMAL_L31"/>
    <property type="match status" value="1"/>
</dbReference>
<reference key="1">
    <citation type="journal article" date="2008" name="J. Bacteriol.">
        <title>The pangenome structure of Escherichia coli: comparative genomic analysis of E. coli commensal and pathogenic isolates.</title>
        <authorList>
            <person name="Rasko D.A."/>
            <person name="Rosovitz M.J."/>
            <person name="Myers G.S.A."/>
            <person name="Mongodin E.F."/>
            <person name="Fricke W.F."/>
            <person name="Gajer P."/>
            <person name="Crabtree J."/>
            <person name="Sebaihia M."/>
            <person name="Thomson N.R."/>
            <person name="Chaudhuri R."/>
            <person name="Henderson I.R."/>
            <person name="Sperandio V."/>
            <person name="Ravel J."/>
        </authorList>
    </citation>
    <scope>NUCLEOTIDE SEQUENCE [LARGE SCALE GENOMIC DNA]</scope>
    <source>
        <strain>E24377A / ETEC</strain>
    </source>
</reference>
<sequence length="70" mass="7871">MKKDIHPKYEEITASCSCGNVMKIRSTVGHDLNLDVCSKCHPFFTGKQRDVATGGRVDRFNKRFNIPGSK</sequence>
<gene>
    <name evidence="1" type="primary">rpmE</name>
    <name type="ordered locus">EcE24377A_4472</name>
</gene>
<protein>
    <recommendedName>
        <fullName evidence="1">Large ribosomal subunit protein bL31</fullName>
    </recommendedName>
    <alternativeName>
        <fullName evidence="2">50S ribosomal protein L31</fullName>
    </alternativeName>
</protein>
<comment type="function">
    <text evidence="1">Binds the 23S rRNA.</text>
</comment>
<comment type="cofactor">
    <cofactor evidence="1">
        <name>Zn(2+)</name>
        <dbReference type="ChEBI" id="CHEBI:29105"/>
    </cofactor>
    <text evidence="1">Binds 1 zinc ion per subunit.</text>
</comment>
<comment type="subunit">
    <text evidence="1">Part of the 50S ribosomal subunit.</text>
</comment>
<comment type="similarity">
    <text evidence="1">Belongs to the bacterial ribosomal protein bL31 family. Type A subfamily.</text>
</comment>
<name>RL31_ECO24</name>